<accession>P0DH76</accession>
<accession>P56967</accession>
<sequence length="263" mass="28572">MQRKQEMMTIVAQKQLAPRIYQLDLQGELVKEMTRPGQFVHIKVPRADLLLRRPISINQIDHSNETCRLIYRVEGAGTEVFATMKAGEQLDILGPLGNGFDITTVAAGQTAFIVGGGIGIPPLYELSKQLNEKGVKVIHFLGYASKEVAYYQQEFMALGETHFATDDGSFGAHGNVGRLLSEALAKGRIPDAVYACGANGMLKAIDSLFPTHPHVYLSLEERMACGIGACYACVCHKKGDTTGAKSVKVCDEGPIFKASEVIL</sequence>
<evidence type="ECO:0000250" key="1"/>
<evidence type="ECO:0000269" key="2">
    <source>
    </source>
</evidence>
<evidence type="ECO:0000305" key="3"/>
<reference key="1">
    <citation type="journal article" date="2003" name="Science">
        <title>Role of mobile DNA in the evolution of vancomycin-resistant Enterococcus faecalis.</title>
        <authorList>
            <person name="Paulsen I.T."/>
            <person name="Banerjei L."/>
            <person name="Myers G.S.A."/>
            <person name="Nelson K.E."/>
            <person name="Seshadri R."/>
            <person name="Read T.D."/>
            <person name="Fouts D.E."/>
            <person name="Eisen J.A."/>
            <person name="Gill S.R."/>
            <person name="Heidelberg J.F."/>
            <person name="Tettelin H."/>
            <person name="Dodson R.J."/>
            <person name="Umayam L.A."/>
            <person name="Brinkac L.M."/>
            <person name="Beanan M.J."/>
            <person name="Daugherty S.C."/>
            <person name="DeBoy R.T."/>
            <person name="Durkin S.A."/>
            <person name="Kolonay J.F."/>
            <person name="Madupu R."/>
            <person name="Nelson W.C."/>
            <person name="Vamathevan J.J."/>
            <person name="Tran B."/>
            <person name="Upton J."/>
            <person name="Hansen T."/>
            <person name="Shetty J."/>
            <person name="Khouri H.M."/>
            <person name="Utterback T.R."/>
            <person name="Radune D."/>
            <person name="Ketchum K.A."/>
            <person name="Dougherty B.A."/>
            <person name="Fraser C.M."/>
        </authorList>
    </citation>
    <scope>NUCLEOTIDE SEQUENCE [LARGE SCALE GENOMIC DNA]</scope>
    <source>
        <strain>ATCC 700802 / V583</strain>
    </source>
</reference>
<reference key="2">
    <citation type="journal article" date="1999" name="Biochemistry">
        <title>Dihydroorotate dehydrogenase B of Enterococcus faecalis. Characterization and insights into chemical mechanism.</title>
        <authorList>
            <person name="Marcinkeviciene J."/>
            <person name="Tinney L.M."/>
            <person name="Wang K.H."/>
            <person name="Rogers M.J."/>
            <person name="Copeland R.A."/>
        </authorList>
    </citation>
    <scope>FUNCTION</scope>
    <scope>COFACTOR</scope>
    <scope>SUBUNIT</scope>
    <source>
        <strain>ATCC 29212 / DSM 2570</strain>
    </source>
</reference>
<keyword id="KW-0001">2Fe-2S</keyword>
<keyword id="KW-0249">Electron transport</keyword>
<keyword id="KW-0274">FAD</keyword>
<keyword id="KW-0285">Flavoprotein</keyword>
<keyword id="KW-0408">Iron</keyword>
<keyword id="KW-0411">Iron-sulfur</keyword>
<keyword id="KW-0479">Metal-binding</keyword>
<keyword id="KW-0665">Pyrimidine biosynthesis</keyword>
<keyword id="KW-1185">Reference proteome</keyword>
<keyword id="KW-0813">Transport</keyword>
<gene>
    <name type="primary">pyrK</name>
    <name type="synonym">pyrDII</name>
    <name type="ordered locus">EF_1715</name>
</gene>
<proteinExistence type="evidence at protein level"/>
<name>PYRK_ENTFA</name>
<comment type="function">
    <text evidence="2">Responsible for channeling the electrons from the oxidation of dihydroorotate from the FMN redox center in the PyrD type B subunit to the ultimate electron acceptor NAD(+).</text>
</comment>
<comment type="cofactor">
    <cofactor evidence="2">
        <name>[2Fe-2S] cluster</name>
        <dbReference type="ChEBI" id="CHEBI:190135"/>
    </cofactor>
    <text evidence="2">Binds 1 [2Fe-2S] cluster per subunit.</text>
</comment>
<comment type="cofactor">
    <cofactor evidence="2">
        <name>FAD</name>
        <dbReference type="ChEBI" id="CHEBI:57692"/>
    </cofactor>
    <text evidence="2">Binds 1 FAD per subunit.</text>
</comment>
<comment type="pathway">
    <text>Pyrimidine metabolism; UMP biosynthesis via de novo pathway; orotate from (S)-dihydroorotate (NAD(+) route): step 1/1.</text>
</comment>
<comment type="subunit">
    <text evidence="2">Heterotetramer of 2 PyrK and 2 PyrD type B subunits.</text>
</comment>
<comment type="similarity">
    <text evidence="3">Belongs to the PyrK family.</text>
</comment>
<dbReference type="EMBL" id="AE016830">
    <property type="protein sequence ID" value="AAO81491.1"/>
    <property type="molecule type" value="Genomic_DNA"/>
</dbReference>
<dbReference type="RefSeq" id="NP_815421.1">
    <property type="nucleotide sequence ID" value="NC_004668.1"/>
</dbReference>
<dbReference type="RefSeq" id="WP_002365731.1">
    <property type="nucleotide sequence ID" value="NZ_KE136528.1"/>
</dbReference>
<dbReference type="SMR" id="P0DH76"/>
<dbReference type="STRING" id="226185.EF_1715"/>
<dbReference type="EnsemblBacteria" id="AAO81491">
    <property type="protein sequence ID" value="AAO81491"/>
    <property type="gene ID" value="EF_1715"/>
</dbReference>
<dbReference type="KEGG" id="efa:EF1715"/>
<dbReference type="PATRIC" id="fig|226185.45.peg.1797"/>
<dbReference type="eggNOG" id="COG0543">
    <property type="taxonomic scope" value="Bacteria"/>
</dbReference>
<dbReference type="HOGENOM" id="CLU_003827_1_2_9"/>
<dbReference type="SABIO-RK" id="P0DH76"/>
<dbReference type="UniPathway" id="UPA00070">
    <property type="reaction ID" value="UER00945"/>
</dbReference>
<dbReference type="Proteomes" id="UP000001415">
    <property type="component" value="Chromosome"/>
</dbReference>
<dbReference type="GO" id="GO:0051537">
    <property type="term" value="F:2 iron, 2 sulfur cluster binding"/>
    <property type="evidence" value="ECO:0007669"/>
    <property type="project" value="UniProtKB-KW"/>
</dbReference>
<dbReference type="GO" id="GO:0009055">
    <property type="term" value="F:electron transfer activity"/>
    <property type="evidence" value="ECO:0007669"/>
    <property type="project" value="UniProtKB-UniRule"/>
</dbReference>
<dbReference type="GO" id="GO:0050660">
    <property type="term" value="F:flavin adenine dinucleotide binding"/>
    <property type="evidence" value="ECO:0007669"/>
    <property type="project" value="InterPro"/>
</dbReference>
<dbReference type="GO" id="GO:0046872">
    <property type="term" value="F:metal ion binding"/>
    <property type="evidence" value="ECO:0007669"/>
    <property type="project" value="UniProtKB-KW"/>
</dbReference>
<dbReference type="GO" id="GO:0016491">
    <property type="term" value="F:oxidoreductase activity"/>
    <property type="evidence" value="ECO:0007669"/>
    <property type="project" value="InterPro"/>
</dbReference>
<dbReference type="GO" id="GO:0044205">
    <property type="term" value="P:'de novo' UMP biosynthetic process"/>
    <property type="evidence" value="ECO:0007669"/>
    <property type="project" value="UniProtKB-UniRule"/>
</dbReference>
<dbReference type="CDD" id="cd06218">
    <property type="entry name" value="DHOD_e_trans"/>
    <property type="match status" value="1"/>
</dbReference>
<dbReference type="Gene3D" id="2.10.240.10">
    <property type="entry name" value="Dihydroorotate dehydrogenase, electron transfer subunit"/>
    <property type="match status" value="1"/>
</dbReference>
<dbReference type="Gene3D" id="3.40.50.80">
    <property type="entry name" value="Nucleotide-binding domain of ferredoxin-NADP reductase (FNR) module"/>
    <property type="match status" value="1"/>
</dbReference>
<dbReference type="Gene3D" id="2.40.30.10">
    <property type="entry name" value="Translation factors"/>
    <property type="match status" value="1"/>
</dbReference>
<dbReference type="HAMAP" id="MF_01211">
    <property type="entry name" value="DHODB_Fe_S_bind"/>
    <property type="match status" value="1"/>
</dbReference>
<dbReference type="InterPro" id="IPR008333">
    <property type="entry name" value="Cbr1-like_FAD-bd_dom"/>
</dbReference>
<dbReference type="InterPro" id="IPR012165">
    <property type="entry name" value="Cyt_c3_hydrogenase_gsu"/>
</dbReference>
<dbReference type="InterPro" id="IPR037117">
    <property type="entry name" value="Dihydroorotate_DH_ele_sf"/>
</dbReference>
<dbReference type="InterPro" id="IPR019480">
    <property type="entry name" value="Dihydroorotate_DH_Fe-S-bd"/>
</dbReference>
<dbReference type="InterPro" id="IPR023455">
    <property type="entry name" value="Dihydroorotate_DHASE_ETsu"/>
</dbReference>
<dbReference type="InterPro" id="IPR017927">
    <property type="entry name" value="FAD-bd_FR_type"/>
</dbReference>
<dbReference type="InterPro" id="IPR039261">
    <property type="entry name" value="FNR_nucleotide-bd"/>
</dbReference>
<dbReference type="InterPro" id="IPR050353">
    <property type="entry name" value="PyrK_electron_transfer"/>
</dbReference>
<dbReference type="InterPro" id="IPR017938">
    <property type="entry name" value="Riboflavin_synthase-like_b-brl"/>
</dbReference>
<dbReference type="NCBIfam" id="NF000797">
    <property type="entry name" value="PRK00054.1-2"/>
    <property type="match status" value="1"/>
</dbReference>
<dbReference type="NCBIfam" id="NF000799">
    <property type="entry name" value="PRK00054.1-4"/>
    <property type="match status" value="1"/>
</dbReference>
<dbReference type="PANTHER" id="PTHR43513">
    <property type="entry name" value="DIHYDROOROTATE DEHYDROGENASE B (NAD(+)), ELECTRON TRANSFER SUBUNIT"/>
    <property type="match status" value="1"/>
</dbReference>
<dbReference type="PANTHER" id="PTHR43513:SF3">
    <property type="entry name" value="DIHYDROOROTATE DEHYDROGENASE B (NAD(+)), ELECTRON TRANSFER SUBUNIT-RELATED"/>
    <property type="match status" value="1"/>
</dbReference>
<dbReference type="Pfam" id="PF10418">
    <property type="entry name" value="DHODB_Fe-S_bind"/>
    <property type="match status" value="1"/>
</dbReference>
<dbReference type="Pfam" id="PF00970">
    <property type="entry name" value="FAD_binding_6"/>
    <property type="match status" value="1"/>
</dbReference>
<dbReference type="PIRSF" id="PIRSF006816">
    <property type="entry name" value="Cyc3_hyd_g"/>
    <property type="match status" value="1"/>
</dbReference>
<dbReference type="SUPFAM" id="SSF52343">
    <property type="entry name" value="Ferredoxin reductase-like, C-terminal NADP-linked domain"/>
    <property type="match status" value="1"/>
</dbReference>
<dbReference type="SUPFAM" id="SSF63380">
    <property type="entry name" value="Riboflavin synthase domain-like"/>
    <property type="match status" value="1"/>
</dbReference>
<dbReference type="PROSITE" id="PS51384">
    <property type="entry name" value="FAD_FR"/>
    <property type="match status" value="1"/>
</dbReference>
<protein>
    <recommendedName>
        <fullName>Dihydroorotate dehydrogenase B (NAD(+)), electron transfer subunit</fullName>
    </recommendedName>
    <alternativeName>
        <fullName>Dihydroorotate oxidase B, electron transfer subunit</fullName>
    </alternativeName>
</protein>
<organism>
    <name type="scientific">Enterococcus faecalis (strain ATCC 700802 / V583)</name>
    <dbReference type="NCBI Taxonomy" id="226185"/>
    <lineage>
        <taxon>Bacteria</taxon>
        <taxon>Bacillati</taxon>
        <taxon>Bacillota</taxon>
        <taxon>Bacilli</taxon>
        <taxon>Lactobacillales</taxon>
        <taxon>Enterococcaceae</taxon>
        <taxon>Enterococcus</taxon>
    </lineage>
</organism>
<feature type="chain" id="PRO_0000148360" description="Dihydroorotate dehydrogenase B (NAD(+)), electron transfer subunit">
    <location>
        <begin position="1"/>
        <end position="263"/>
    </location>
</feature>
<feature type="domain" description="FAD-binding FR-type">
    <location>
        <begin position="3"/>
        <end position="102"/>
    </location>
</feature>
<feature type="binding site" evidence="1">
    <location>
        <begin position="53"/>
        <end position="56"/>
    </location>
    <ligand>
        <name>FAD</name>
        <dbReference type="ChEBI" id="CHEBI:57692"/>
    </ligand>
</feature>
<feature type="binding site" evidence="1">
    <location>
        <begin position="70"/>
        <end position="72"/>
    </location>
    <ligand>
        <name>FAD</name>
        <dbReference type="ChEBI" id="CHEBI:57692"/>
    </ligand>
</feature>
<feature type="binding site" evidence="1">
    <location>
        <begin position="77"/>
        <end position="78"/>
    </location>
    <ligand>
        <name>FAD</name>
        <dbReference type="ChEBI" id="CHEBI:57692"/>
    </ligand>
</feature>
<feature type="binding site" evidence="3">
    <location>
        <position position="225"/>
    </location>
    <ligand>
        <name>[2Fe-2S] cluster</name>
        <dbReference type="ChEBI" id="CHEBI:190135"/>
    </ligand>
</feature>
<feature type="binding site" evidence="3">
    <location>
        <position position="230"/>
    </location>
    <ligand>
        <name>[2Fe-2S] cluster</name>
        <dbReference type="ChEBI" id="CHEBI:190135"/>
    </ligand>
</feature>
<feature type="binding site" evidence="3">
    <location>
        <position position="233"/>
    </location>
    <ligand>
        <name>[2Fe-2S] cluster</name>
        <dbReference type="ChEBI" id="CHEBI:190135"/>
    </ligand>
</feature>
<feature type="binding site" evidence="3">
    <location>
        <position position="250"/>
    </location>
    <ligand>
        <name>[2Fe-2S] cluster</name>
        <dbReference type="ChEBI" id="CHEBI:190135"/>
    </ligand>
</feature>